<organism>
    <name type="scientific">Naja mossambica</name>
    <name type="common">Mozambique spitting cobra</name>
    <dbReference type="NCBI Taxonomy" id="8644"/>
    <lineage>
        <taxon>Eukaryota</taxon>
        <taxon>Metazoa</taxon>
        <taxon>Chordata</taxon>
        <taxon>Craniata</taxon>
        <taxon>Vertebrata</taxon>
        <taxon>Euteleostomi</taxon>
        <taxon>Lepidosauria</taxon>
        <taxon>Squamata</taxon>
        <taxon>Bifurcata</taxon>
        <taxon>Unidentata</taxon>
        <taxon>Episquamata</taxon>
        <taxon>Toxicofera</taxon>
        <taxon>Serpentes</taxon>
        <taxon>Colubroidea</taxon>
        <taxon>Elapidae</taxon>
        <taxon>Elapinae</taxon>
        <taxon>Naja</taxon>
    </lineage>
</organism>
<evidence type="ECO:0000250" key="1"/>
<evidence type="ECO:0000255" key="2">
    <source>
        <dbReference type="PROSITE-ProRule" id="PRU10035"/>
    </source>
</evidence>
<evidence type="ECO:0000255" key="3">
    <source>
        <dbReference type="PROSITE-ProRule" id="PRU10036"/>
    </source>
</evidence>
<evidence type="ECO:0000269" key="4">
    <source>
    </source>
</evidence>
<evidence type="ECO:0000269" key="5">
    <source>
    </source>
</evidence>
<evidence type="ECO:0000305" key="6"/>
<comment type="function">
    <text evidence="4 5">Snake venom phospholipase A2 (PLA2) that causes myonecrosis when injected intramuscularly, causes neuromuscular blockade with a gradual contracture and a decreased sensitivity to ACh and KCl (in the chick biventer cervicis nerve-muscle preparation), abolishes twitches evoked by indirect stimulation earlier than those by direct stimulation (in the mouse phrenic nerve-diaphragm preparation), shows indirect hemolytic activity (PubMed:3615669), and shows weak anticoagulant activity (PubMed:3117784). PLA2 catalyzes the calcium-dependent hydrolysis of the 2-acyl groups in 3-sn-phosphoglycerides.</text>
</comment>
<comment type="catalytic activity">
    <reaction evidence="2 3">
        <text>a 1,2-diacyl-sn-glycero-3-phosphocholine + H2O = a 1-acyl-sn-glycero-3-phosphocholine + a fatty acid + H(+)</text>
        <dbReference type="Rhea" id="RHEA:15801"/>
        <dbReference type="ChEBI" id="CHEBI:15377"/>
        <dbReference type="ChEBI" id="CHEBI:15378"/>
        <dbReference type="ChEBI" id="CHEBI:28868"/>
        <dbReference type="ChEBI" id="CHEBI:57643"/>
        <dbReference type="ChEBI" id="CHEBI:58168"/>
        <dbReference type="EC" id="3.1.1.4"/>
    </reaction>
</comment>
<comment type="cofactor">
    <cofactor evidence="1">
        <name>Ca(2+)</name>
        <dbReference type="ChEBI" id="CHEBI:29108"/>
    </cofactor>
    <text evidence="1">Binds 1 Ca(2+) ion.</text>
</comment>
<comment type="subcellular location">
    <subcellularLocation>
        <location>Secreted</location>
    </subcellularLocation>
</comment>
<comment type="tissue specificity">
    <text>Expressed by the venom gland.</text>
</comment>
<comment type="similarity">
    <text evidence="6">Belongs to the phospholipase A2 family. Group I subfamily. D49 sub-subfamily.</text>
</comment>
<feature type="chain" id="PRO_0000161667" description="Basic phospholipase A2 CM-II">
    <location>
        <begin position="1"/>
        <end position="118"/>
    </location>
</feature>
<feature type="active site" evidence="1">
    <location>
        <position position="47"/>
    </location>
</feature>
<feature type="active site" evidence="1">
    <location>
        <position position="92"/>
    </location>
</feature>
<feature type="binding site" evidence="1">
    <location>
        <position position="27"/>
    </location>
    <ligand>
        <name>Ca(2+)</name>
        <dbReference type="ChEBI" id="CHEBI:29108"/>
    </ligand>
</feature>
<feature type="binding site" evidence="1">
    <location>
        <position position="29"/>
    </location>
    <ligand>
        <name>Ca(2+)</name>
        <dbReference type="ChEBI" id="CHEBI:29108"/>
    </ligand>
</feature>
<feature type="binding site" evidence="1">
    <location>
        <position position="31"/>
    </location>
    <ligand>
        <name>Ca(2+)</name>
        <dbReference type="ChEBI" id="CHEBI:29108"/>
    </ligand>
</feature>
<feature type="binding site" evidence="1">
    <location>
        <position position="48"/>
    </location>
    <ligand>
        <name>Ca(2+)</name>
        <dbReference type="ChEBI" id="CHEBI:29108"/>
    </ligand>
</feature>
<feature type="disulfide bond" evidence="1">
    <location>
        <begin position="11"/>
        <end position="70"/>
    </location>
</feature>
<feature type="disulfide bond" evidence="1">
    <location>
        <begin position="26"/>
        <end position="117"/>
    </location>
</feature>
<feature type="disulfide bond" evidence="1">
    <location>
        <begin position="28"/>
        <end position="44"/>
    </location>
</feature>
<feature type="disulfide bond" evidence="1">
    <location>
        <begin position="43"/>
        <end position="98"/>
    </location>
</feature>
<feature type="disulfide bond" evidence="1">
    <location>
        <begin position="50"/>
        <end position="91"/>
    </location>
</feature>
<feature type="disulfide bond" evidence="1">
    <location>
        <begin position="59"/>
        <end position="84"/>
    </location>
</feature>
<feature type="disulfide bond" evidence="1">
    <location>
        <begin position="77"/>
        <end position="89"/>
    </location>
</feature>
<accession>P00603</accession>
<reference key="1">
    <citation type="journal article" date="1977" name="Biochim. Biophys. Acta">
        <title>Naja mossambica mossambica venom. Purification, some properties and the amino acid sequences of three phospholipases A (CM-I, CM-II and CM-III).</title>
        <authorList>
            <person name="Joubert F.J."/>
        </authorList>
    </citation>
    <scope>PROTEIN SEQUENCE</scope>
    <source>
        <tissue>Venom</tissue>
    </source>
</reference>
<reference key="2">
    <citation type="journal article" date="1987" name="J. Biol. Chem.">
        <title>Structure-function relationships of phospholipases. The anticoagulant region of phospholipases A2.</title>
        <authorList>
            <person name="Kini R.M."/>
            <person name="Evans H.J."/>
        </authorList>
    </citation>
    <scope>FUNCTION</scope>
</reference>
<reference key="3">
    <citation type="journal article" date="1987" name="Proc. Natl. Sci. Counc. Repub. China, B, Life Sci.">
        <title>Pharmacological study on phospholipases A2 isolated from Naja mossambica mossambica venom.</title>
        <authorList>
            <person name="Lin W.W."/>
            <person name="Chang P.L."/>
            <person name="Lee C.Y."/>
            <person name="Joubert F.J."/>
        </authorList>
    </citation>
    <scope>FUNCTION</scope>
</reference>
<dbReference type="EC" id="3.1.1.4"/>
<dbReference type="PIR" id="A90623">
    <property type="entry name" value="PSNJ2M"/>
</dbReference>
<dbReference type="SMR" id="P00603"/>
<dbReference type="GO" id="GO:0005576">
    <property type="term" value="C:extracellular region"/>
    <property type="evidence" value="ECO:0007669"/>
    <property type="project" value="UniProtKB-SubCell"/>
</dbReference>
<dbReference type="GO" id="GO:0005509">
    <property type="term" value="F:calcium ion binding"/>
    <property type="evidence" value="ECO:0007669"/>
    <property type="project" value="InterPro"/>
</dbReference>
<dbReference type="GO" id="GO:0047498">
    <property type="term" value="F:calcium-dependent phospholipase A2 activity"/>
    <property type="evidence" value="ECO:0007669"/>
    <property type="project" value="TreeGrafter"/>
</dbReference>
<dbReference type="GO" id="GO:0005543">
    <property type="term" value="F:phospholipid binding"/>
    <property type="evidence" value="ECO:0007669"/>
    <property type="project" value="TreeGrafter"/>
</dbReference>
<dbReference type="GO" id="GO:0090729">
    <property type="term" value="F:toxin activity"/>
    <property type="evidence" value="ECO:0007669"/>
    <property type="project" value="UniProtKB-KW"/>
</dbReference>
<dbReference type="GO" id="GO:0050482">
    <property type="term" value="P:arachidonate secretion"/>
    <property type="evidence" value="ECO:0007669"/>
    <property type="project" value="InterPro"/>
</dbReference>
<dbReference type="GO" id="GO:0016042">
    <property type="term" value="P:lipid catabolic process"/>
    <property type="evidence" value="ECO:0007669"/>
    <property type="project" value="UniProtKB-KW"/>
</dbReference>
<dbReference type="GO" id="GO:0006644">
    <property type="term" value="P:phospholipid metabolic process"/>
    <property type="evidence" value="ECO:0007669"/>
    <property type="project" value="InterPro"/>
</dbReference>
<dbReference type="CDD" id="cd00125">
    <property type="entry name" value="PLA2c"/>
    <property type="match status" value="1"/>
</dbReference>
<dbReference type="FunFam" id="1.20.90.10:FF:000007">
    <property type="entry name" value="Acidic phospholipase A2"/>
    <property type="match status" value="1"/>
</dbReference>
<dbReference type="Gene3D" id="1.20.90.10">
    <property type="entry name" value="Phospholipase A2 domain"/>
    <property type="match status" value="1"/>
</dbReference>
<dbReference type="InterPro" id="IPR001211">
    <property type="entry name" value="PLipase_A2"/>
</dbReference>
<dbReference type="InterPro" id="IPR033112">
    <property type="entry name" value="PLipase_A2_Asp_AS"/>
</dbReference>
<dbReference type="InterPro" id="IPR016090">
    <property type="entry name" value="PLipase_A2_dom"/>
</dbReference>
<dbReference type="InterPro" id="IPR036444">
    <property type="entry name" value="PLipase_A2_dom_sf"/>
</dbReference>
<dbReference type="InterPro" id="IPR033113">
    <property type="entry name" value="PLipase_A2_His_AS"/>
</dbReference>
<dbReference type="PANTHER" id="PTHR11716:SF51">
    <property type="entry name" value="PHOSPHOLIPASE A2"/>
    <property type="match status" value="1"/>
</dbReference>
<dbReference type="PANTHER" id="PTHR11716">
    <property type="entry name" value="PHOSPHOLIPASE A2 FAMILY MEMBER"/>
    <property type="match status" value="1"/>
</dbReference>
<dbReference type="Pfam" id="PF00068">
    <property type="entry name" value="Phospholip_A2_1"/>
    <property type="match status" value="1"/>
</dbReference>
<dbReference type="PRINTS" id="PR00389">
    <property type="entry name" value="PHPHLIPASEA2"/>
</dbReference>
<dbReference type="SMART" id="SM00085">
    <property type="entry name" value="PA2c"/>
    <property type="match status" value="1"/>
</dbReference>
<dbReference type="SUPFAM" id="SSF48619">
    <property type="entry name" value="Phospholipase A2, PLA2"/>
    <property type="match status" value="1"/>
</dbReference>
<dbReference type="PROSITE" id="PS00119">
    <property type="entry name" value="PA2_ASP"/>
    <property type="match status" value="1"/>
</dbReference>
<dbReference type="PROSITE" id="PS00118">
    <property type="entry name" value="PA2_HIS"/>
    <property type="match status" value="1"/>
</dbReference>
<protein>
    <recommendedName>
        <fullName>Basic phospholipase A2 CM-II</fullName>
        <shortName>svPLA2</shortName>
        <ecNumber>3.1.1.4</ecNumber>
    </recommendedName>
    <alternativeName>
        <fullName>Phosphatidylcholine 2-acylhydrolase</fullName>
    </alternativeName>
</protein>
<sequence length="118" mass="13234">NLYQFKNMIHCTVPSRPWWHFADYGCYCGRGGKGTAVDDLDRCCQVHDNCYGEAEKLGCWPYLTLYKYECSQGKLTCSGGNNKCAAAVCNCDLVAANCFAGARYIDANYNINLKERCQ</sequence>
<keyword id="KW-1203">Blood coagulation cascade inhibiting toxin</keyword>
<keyword id="KW-0106">Calcium</keyword>
<keyword id="KW-0903">Direct protein sequencing</keyword>
<keyword id="KW-1015">Disulfide bond</keyword>
<keyword id="KW-1199">Hemostasis impairing toxin</keyword>
<keyword id="KW-0378">Hydrolase</keyword>
<keyword id="KW-0442">Lipid degradation</keyword>
<keyword id="KW-0443">Lipid metabolism</keyword>
<keyword id="KW-0479">Metal-binding</keyword>
<keyword id="KW-0959">Myotoxin</keyword>
<keyword id="KW-0528">Neurotoxin</keyword>
<keyword id="KW-0964">Secreted</keyword>
<keyword id="KW-0800">Toxin</keyword>
<name>PA2B2_NAJMO</name>
<proteinExistence type="evidence at protein level"/>